<name>MOAC_AZOBR</name>
<gene>
    <name type="primary">moaC</name>
</gene>
<sequence length="92" mass="9674">MTDQPLAGFTHFDAEGRAVMVDVSGKADTERSATARGSVLMQPETLALILQGGVKKGDVLSVARLAGIMGAKRTPDLIPLCHPLMLTSVKVD</sequence>
<feature type="chain" id="PRO_0000097785" description="Cyclic pyranopterin monophosphate synthase">
    <location>
        <begin position="1"/>
        <end position="92" status="greater than"/>
    </location>
</feature>
<feature type="binding site" evidence="1">
    <location>
        <begin position="80"/>
        <end position="82"/>
    </location>
    <ligand>
        <name>substrate</name>
    </ligand>
</feature>
<feature type="non-terminal residue">
    <location>
        <position position="92"/>
    </location>
</feature>
<reference key="1">
    <citation type="journal article" date="1991" name="Mol. Gen. Genet.">
        <title>Relationship between tryptophan biosynthesis and indole-3-acetic acid production in Azospirillum: identification and sequencing of a trpGDC cluster.</title>
        <authorList>
            <person name="Zimmer W."/>
            <person name="Aparicio C."/>
            <person name="Elmerich C."/>
        </authorList>
    </citation>
    <scope>NUCLEOTIDE SEQUENCE [GENOMIC DNA]</scope>
    <source>
        <strain>ATCC 29145 / DSM 1690 / IMET 11303 / Sp7</strain>
    </source>
</reference>
<accession>P26944</accession>
<keyword id="KW-0456">Lyase</keyword>
<keyword id="KW-0501">Molybdenum cofactor biosynthesis</keyword>
<dbReference type="EC" id="4.6.1.17" evidence="1"/>
<dbReference type="EMBL" id="X57853">
    <property type="protein sequence ID" value="CAA40988.1"/>
    <property type="molecule type" value="Genomic_DNA"/>
</dbReference>
<dbReference type="PIR" id="S17707">
    <property type="entry name" value="S17707"/>
</dbReference>
<dbReference type="SMR" id="P26944"/>
<dbReference type="UniPathway" id="UPA00344"/>
<dbReference type="GO" id="GO:0061799">
    <property type="term" value="F:cyclic pyranopterin monophosphate synthase activity"/>
    <property type="evidence" value="ECO:0007669"/>
    <property type="project" value="UniProtKB-EC"/>
</dbReference>
<dbReference type="GO" id="GO:0006777">
    <property type="term" value="P:Mo-molybdopterin cofactor biosynthetic process"/>
    <property type="evidence" value="ECO:0007669"/>
    <property type="project" value="UniProtKB-KW"/>
</dbReference>
<dbReference type="Gene3D" id="3.30.70.640">
    <property type="entry name" value="Molybdopterin cofactor biosynthesis C (MoaC) domain"/>
    <property type="match status" value="1"/>
</dbReference>
<dbReference type="InterPro" id="IPR036522">
    <property type="entry name" value="MoaC_sf"/>
</dbReference>
<dbReference type="InterPro" id="IPR002820">
    <property type="entry name" value="Mopterin_CF_biosynth-C_dom"/>
</dbReference>
<dbReference type="Pfam" id="PF01967">
    <property type="entry name" value="MoaC"/>
    <property type="match status" value="1"/>
</dbReference>
<dbReference type="SUPFAM" id="SSF55040">
    <property type="entry name" value="Molybdenum cofactor biosynthesis protein C, MoaC"/>
    <property type="match status" value="1"/>
</dbReference>
<organism>
    <name type="scientific">Azospirillum brasilense</name>
    <dbReference type="NCBI Taxonomy" id="192"/>
    <lineage>
        <taxon>Bacteria</taxon>
        <taxon>Pseudomonadati</taxon>
        <taxon>Pseudomonadota</taxon>
        <taxon>Alphaproteobacteria</taxon>
        <taxon>Rhodospirillales</taxon>
        <taxon>Azospirillaceae</taxon>
        <taxon>Azospirillum</taxon>
    </lineage>
</organism>
<comment type="function">
    <text evidence="1">Catalyzes the conversion of (8S)-3',8-cyclo-7,8-dihydroguanosine 5'-triphosphate to cyclic pyranopterin monophosphate (cPMP).</text>
</comment>
<comment type="catalytic activity">
    <reaction evidence="1">
        <text>(8S)-3',8-cyclo-7,8-dihydroguanosine 5'-triphosphate = cyclic pyranopterin phosphate + diphosphate</text>
        <dbReference type="Rhea" id="RHEA:49580"/>
        <dbReference type="ChEBI" id="CHEBI:33019"/>
        <dbReference type="ChEBI" id="CHEBI:59648"/>
        <dbReference type="ChEBI" id="CHEBI:131766"/>
        <dbReference type="EC" id="4.6.1.17"/>
    </reaction>
</comment>
<comment type="pathway">
    <text evidence="1">Cofactor biosynthesis; molybdopterin biosynthesis.</text>
</comment>
<comment type="subunit">
    <text evidence="1">Homohexamer; trimer of dimers.</text>
</comment>
<comment type="similarity">
    <text evidence="2">Belongs to the MoaC family.</text>
</comment>
<proteinExistence type="inferred from homology"/>
<protein>
    <recommendedName>
        <fullName evidence="1">Cyclic pyranopterin monophosphate synthase</fullName>
        <ecNumber evidence="1">4.6.1.17</ecNumber>
    </recommendedName>
    <alternativeName>
        <fullName evidence="1">Molybdenum cofactor biosynthesis protein C</fullName>
    </alternativeName>
</protein>
<evidence type="ECO:0000250" key="1">
    <source>
        <dbReference type="UniProtKB" id="P0A738"/>
    </source>
</evidence>
<evidence type="ECO:0000305" key="2"/>